<keyword id="KW-0963">Cytoplasm</keyword>
<keyword id="KW-0539">Nucleus</keyword>
<keyword id="KW-1185">Reference proteome</keyword>
<keyword id="KW-0677">Repeat</keyword>
<reference key="1">
    <citation type="journal article" date="1998" name="DNA Res.">
        <title>Structural analysis of Arabidopsis thaliana chromosome 5. VI. Sequence features of the regions of 1,367,185 bp covered by 19 physically assigned P1 and TAC clones.</title>
        <authorList>
            <person name="Kotani H."/>
            <person name="Nakamura Y."/>
            <person name="Sato S."/>
            <person name="Asamizu E."/>
            <person name="Kaneko T."/>
            <person name="Miyajima N."/>
            <person name="Tabata S."/>
        </authorList>
    </citation>
    <scope>NUCLEOTIDE SEQUENCE [LARGE SCALE GENOMIC DNA]</scope>
    <source>
        <strain>cv. Columbia</strain>
    </source>
</reference>
<reference key="2">
    <citation type="journal article" date="2017" name="Plant J.">
        <title>Araport11: a complete reannotation of the Arabidopsis thaliana reference genome.</title>
        <authorList>
            <person name="Cheng C.Y."/>
            <person name="Krishnakumar V."/>
            <person name="Chan A.P."/>
            <person name="Thibaud-Nissen F."/>
            <person name="Schobel S."/>
            <person name="Town C.D."/>
        </authorList>
    </citation>
    <scope>GENOME REANNOTATION</scope>
    <source>
        <strain>cv. Columbia</strain>
    </source>
</reference>
<reference key="3">
    <citation type="journal article" date="2008" name="BMC Genomics">
        <title>LEA (late embryogenesis abundant) proteins and their encoding genes in Arabidopsis thaliana.</title>
        <authorList>
            <person name="Hundertmark M."/>
            <person name="Hincha D.K."/>
        </authorList>
    </citation>
    <scope>GENE FAMILY</scope>
    <scope>NOMENCLATURE</scope>
</reference>
<reference key="4">
    <citation type="journal article" date="2014" name="Plant Cell">
        <title>The ubiquitous distribution of late embryogenesis abundant proteins across cell compartments in Arabidopsis offers tailored protection against abiotic stress.</title>
        <authorList>
            <person name="Candat A."/>
            <person name="Paszkiewicz G."/>
            <person name="Neveu M."/>
            <person name="Gautier R."/>
            <person name="Logan D.C."/>
            <person name="Avelange-Macherel M.-H."/>
            <person name="Macherel D."/>
        </authorList>
    </citation>
    <scope>SUBCELLULAR LOCATION</scope>
    <scope>GENE FAMILY</scope>
    <scope>NOMENCLATURE</scope>
</reference>
<dbReference type="EMBL" id="AB013388">
    <property type="protein sequence ID" value="BAB09789.1"/>
    <property type="molecule type" value="Genomic_DNA"/>
</dbReference>
<dbReference type="EMBL" id="CP002688">
    <property type="protein sequence ID" value="AED96331.1"/>
    <property type="molecule type" value="Genomic_DNA"/>
</dbReference>
<dbReference type="RefSeq" id="NP_200139.1">
    <property type="nucleotide sequence ID" value="NM_124706.2"/>
</dbReference>
<dbReference type="SMR" id="Q9FK14"/>
<dbReference type="STRING" id="3702.Q9FK14"/>
<dbReference type="iPTMnet" id="Q9FK14"/>
<dbReference type="PaxDb" id="3702-AT5G53270.1"/>
<dbReference type="EnsemblPlants" id="AT5G53270.1">
    <property type="protein sequence ID" value="AT5G53270.1"/>
    <property type="gene ID" value="AT5G53270"/>
</dbReference>
<dbReference type="GeneID" id="835408"/>
<dbReference type="Gramene" id="AT5G53270.1">
    <property type="protein sequence ID" value="AT5G53270.1"/>
    <property type="gene ID" value="AT5G53270"/>
</dbReference>
<dbReference type="KEGG" id="ath:AT5G53270"/>
<dbReference type="Araport" id="AT5G53270"/>
<dbReference type="TAIR" id="AT5G53270"/>
<dbReference type="eggNOG" id="ENOG502R1JD">
    <property type="taxonomic scope" value="Eukaryota"/>
</dbReference>
<dbReference type="HOGENOM" id="CLU_1549773_0_0_1"/>
<dbReference type="InParanoid" id="Q9FK14"/>
<dbReference type="OMA" id="KLNCNPC"/>
<dbReference type="PhylomeDB" id="Q9FK14"/>
<dbReference type="PRO" id="PR:Q9FK14"/>
<dbReference type="Proteomes" id="UP000006548">
    <property type="component" value="Chromosome 5"/>
</dbReference>
<dbReference type="ExpressionAtlas" id="Q9FK14">
    <property type="expression patterns" value="baseline and differential"/>
</dbReference>
<dbReference type="GO" id="GO:0005829">
    <property type="term" value="C:cytosol"/>
    <property type="evidence" value="ECO:0007005"/>
    <property type="project" value="TAIR"/>
</dbReference>
<dbReference type="GO" id="GO:0005634">
    <property type="term" value="C:nucleus"/>
    <property type="evidence" value="ECO:0000314"/>
    <property type="project" value="UniProtKB"/>
</dbReference>
<dbReference type="InterPro" id="IPR042971">
    <property type="entry name" value="LEA_SMP"/>
</dbReference>
<dbReference type="InterPro" id="IPR007011">
    <property type="entry name" value="LEA_SMP_dom"/>
</dbReference>
<dbReference type="PANTHER" id="PTHR31174:SF27">
    <property type="entry name" value="LATE EMBRYOGENESIS ABUNDANT PROTEIN 49-RELATED"/>
    <property type="match status" value="1"/>
</dbReference>
<dbReference type="PANTHER" id="PTHR31174">
    <property type="entry name" value="SEED MATURATION FAMILY PROTEIN"/>
    <property type="match status" value="1"/>
</dbReference>
<dbReference type="Pfam" id="PF04927">
    <property type="entry name" value="SMP"/>
    <property type="match status" value="2"/>
</dbReference>
<gene>
    <name evidence="4" type="ordered locus">At5g53270</name>
    <name evidence="5" type="ORF">K19E1.7</name>
</gene>
<sequence>MMFGFGLLKQYAGTTEQISTAAEALVGRSTTLTEALKAAAINVGRKPVETTDLAAIKEVEARAIGGDIESDGGVTAVASKAVARNQKIGEDNEKTNLGDVIAEIDVKVTRDREVTSEDAEAVIRAELNHSPFNNIIPGGVAESVTAAYKLNCNPCNVSL</sequence>
<proteinExistence type="inferred from homology"/>
<accession>Q9FK14</accession>
<feature type="chain" id="PRO_0000436063" description="Late embryogenesis abundant protein 50">
    <location>
        <begin position="1"/>
        <end position="159"/>
    </location>
</feature>
<feature type="domain" description="SMP 1" evidence="1">
    <location>
        <begin position="30"/>
        <end position="87"/>
    </location>
</feature>
<feature type="domain" description="SMP 2" evidence="1">
    <location>
        <begin position="96"/>
        <end position="151"/>
    </location>
</feature>
<comment type="function">
    <text evidence="3">LEA proteins are late embryonic proteins abundant in higher plant seed embryos. The function of those proteins is not known.</text>
</comment>
<comment type="subcellular location">
    <subcellularLocation>
        <location evidence="2">Cytoplasm</location>
    </subcellularLocation>
    <subcellularLocation>
        <location evidence="2">Nucleus</location>
    </subcellularLocation>
</comment>
<comment type="similarity">
    <text evidence="3">Belongs to the LEA type SMP family.</text>
</comment>
<name>LEA50_ARATH</name>
<evidence type="ECO:0000255" key="1"/>
<evidence type="ECO:0000269" key="2">
    <source>
    </source>
</evidence>
<evidence type="ECO:0000305" key="3"/>
<evidence type="ECO:0000312" key="4">
    <source>
        <dbReference type="Araport" id="AT5G53270"/>
    </source>
</evidence>
<evidence type="ECO:0000312" key="5">
    <source>
        <dbReference type="EMBL" id="BAB09789.1"/>
    </source>
</evidence>
<organism>
    <name type="scientific">Arabidopsis thaliana</name>
    <name type="common">Mouse-ear cress</name>
    <dbReference type="NCBI Taxonomy" id="3702"/>
    <lineage>
        <taxon>Eukaryota</taxon>
        <taxon>Viridiplantae</taxon>
        <taxon>Streptophyta</taxon>
        <taxon>Embryophyta</taxon>
        <taxon>Tracheophyta</taxon>
        <taxon>Spermatophyta</taxon>
        <taxon>Magnoliopsida</taxon>
        <taxon>eudicotyledons</taxon>
        <taxon>Gunneridae</taxon>
        <taxon>Pentapetalae</taxon>
        <taxon>rosids</taxon>
        <taxon>malvids</taxon>
        <taxon>Brassicales</taxon>
        <taxon>Brassicaceae</taxon>
        <taxon>Camelineae</taxon>
        <taxon>Arabidopsis</taxon>
    </lineage>
</organism>
<protein>
    <recommendedName>
        <fullName evidence="3">Late embryogenesis abundant protein 50</fullName>
        <shortName evidence="3">LEA 50</shortName>
    </recommendedName>
</protein>